<gene>
    <name evidence="4" type="primary">TRI12</name>
</gene>
<proteinExistence type="inferred from homology"/>
<comment type="function">
    <text evidence="1">Efflux pump that provides the dual role of trichothecene export and self-protection by allowing the fungus to evade the harmful effect of its own trichothecene production.</text>
</comment>
<comment type="subcellular location">
    <subcellularLocation>
        <location evidence="5">Cell membrane</location>
        <topology evidence="2">Multi-pass membrane protein</topology>
    </subcellularLocation>
</comment>
<comment type="similarity">
    <text evidence="5">Belongs to the major facilitator superfamily.</text>
</comment>
<feature type="chain" id="PRO_0000445614" description="Trichothecene efflux pump TRI12">
    <location>
        <begin position="1"/>
        <end position="602"/>
    </location>
</feature>
<feature type="transmembrane region" description="Helical" evidence="2">
    <location>
        <begin position="49"/>
        <end position="69"/>
    </location>
</feature>
<feature type="transmembrane region" description="Helical" evidence="2">
    <location>
        <begin position="77"/>
        <end position="97"/>
    </location>
</feature>
<feature type="transmembrane region" description="Helical" evidence="2">
    <location>
        <begin position="107"/>
        <end position="127"/>
    </location>
</feature>
<feature type="transmembrane region" description="Helical" evidence="2">
    <location>
        <begin position="134"/>
        <end position="154"/>
    </location>
</feature>
<feature type="transmembrane region" description="Helical" evidence="2">
    <location>
        <begin position="164"/>
        <end position="184"/>
    </location>
</feature>
<feature type="transmembrane region" description="Helical" evidence="2">
    <location>
        <begin position="196"/>
        <end position="216"/>
    </location>
</feature>
<feature type="transmembrane region" description="Helical" evidence="2">
    <location>
        <begin position="240"/>
        <end position="260"/>
    </location>
</feature>
<feature type="transmembrane region" description="Helical" evidence="2">
    <location>
        <begin position="271"/>
        <end position="291"/>
    </location>
</feature>
<feature type="transmembrane region" description="Helical" evidence="2">
    <location>
        <begin position="297"/>
        <end position="317"/>
    </location>
</feature>
<feature type="transmembrane region" description="Helical" evidence="2">
    <location>
        <begin position="355"/>
        <end position="375"/>
    </location>
</feature>
<feature type="transmembrane region" description="Helical" evidence="2">
    <location>
        <begin position="380"/>
        <end position="400"/>
    </location>
</feature>
<feature type="transmembrane region" description="Helical" evidence="2">
    <location>
        <begin position="408"/>
        <end position="428"/>
    </location>
</feature>
<feature type="transmembrane region" description="Helical" evidence="2">
    <location>
        <begin position="450"/>
        <end position="470"/>
    </location>
</feature>
<feature type="transmembrane region" description="Helical" evidence="2">
    <location>
        <begin position="484"/>
        <end position="504"/>
    </location>
</feature>
<feature type="transmembrane region" description="Helical" evidence="2">
    <location>
        <begin position="532"/>
        <end position="552"/>
    </location>
</feature>
<feature type="glycosylation site" description="N-linked (GlcNAc...) asparagine" evidence="3">
    <location>
        <position position="160"/>
    </location>
</feature>
<feature type="glycosylation site" description="N-linked (GlcNAc...) asparagine" evidence="3">
    <location>
        <position position="590"/>
    </location>
</feature>
<protein>
    <recommendedName>
        <fullName evidence="4">Trichothecene efflux pump TRI12</fullName>
    </recommendedName>
    <alternativeName>
        <fullName evidence="4">Trichothecene biosynthesis protein 12</fullName>
    </alternativeName>
</protein>
<name>TRI12_TRIAR</name>
<reference key="1">
    <citation type="journal article" date="2011" name="Appl. Environ. Microbiol.">
        <title>Identification of loci and functional characterization of trichothecene biosynthesis genes in filamentous fungi of the genus Trichoderma.</title>
        <authorList>
            <person name="Cardoza R.E."/>
            <person name="Malmierca M.G."/>
            <person name="Hermosa M.R."/>
            <person name="Alexander N.J."/>
            <person name="McCormick S.P."/>
            <person name="Proctor R.H."/>
            <person name="Tijerino A.M."/>
            <person name="Rumbero A."/>
            <person name="Monte E."/>
            <person name="Gutierrez S."/>
        </authorList>
    </citation>
    <scope>NUCLEOTIDE SEQUENCE [GENOMIC DNA]</scope>
    <scope>IDENTIFICATION</scope>
    <source>
        <strain>IBT 40837</strain>
    </source>
</reference>
<evidence type="ECO:0000250" key="1">
    <source>
        <dbReference type="UniProtKB" id="Q9C1B3"/>
    </source>
</evidence>
<evidence type="ECO:0000255" key="2"/>
<evidence type="ECO:0000255" key="3">
    <source>
        <dbReference type="PROSITE-ProRule" id="PRU00498"/>
    </source>
</evidence>
<evidence type="ECO:0000303" key="4">
    <source>
    </source>
</evidence>
<evidence type="ECO:0000305" key="5"/>
<sequence>MGAPDEVLNIAPDEGDKLRAKALAADAEELPAGYYTSPRVVCTFMSISLTLLSTYFAFEASAAAISFIIEDIGPSENVSLFSTVWTVSQSISILLMGRLTDRFGRRGFILGTNCVGIIGGIGCLYSFQRFNTMIGAQVLLGLAAGQPGACILFIGELMSNKTKFLGNVIVAFPNVIATGFGPYIGQSLGINGNWRWIFYIYIIITAVSTVLAFIFYHPPSFAQLHGKKISRRDELLKVDWIGAFFLTAGMTLFLLGVSWGGSPDPWDSPKILGLLISGIVSCVIFVLYECYAKIDRPIIPMEFFPGTFAGFGCMLLISGVMGSMNTALFIMYPQQVQHIFSSTLSSWQEVAWMSSTAGFGIWAGIVTLGSLFHIFRHIRWQLIFGSAWVTAFLGAMASVNRHKKSEAIAFSICTGFVIGWAEDVTMLLVQFISSDENLGVTFSVVSATRAICGSIFTAAFISLYTIKFPGQLQSKLVPAVPRRWGFPGVLLVAGFAYWRALTGQCPSYWLLFPGMTSNLIQVTNDAVADSYAAAYSYVYYFAMALGVIAIIASACTKDFDHYLTSHVPHQIYAAKDADVDLLDSDRSTENVSSAAVTVSEKE</sequence>
<accession>G0KYA8</accession>
<organism>
    <name type="scientific">Trichoderma arundinaceum</name>
    <dbReference type="NCBI Taxonomy" id="490622"/>
    <lineage>
        <taxon>Eukaryota</taxon>
        <taxon>Fungi</taxon>
        <taxon>Dikarya</taxon>
        <taxon>Ascomycota</taxon>
        <taxon>Pezizomycotina</taxon>
        <taxon>Sordariomycetes</taxon>
        <taxon>Hypocreomycetidae</taxon>
        <taxon>Hypocreales</taxon>
        <taxon>Hypocreaceae</taxon>
        <taxon>Trichoderma</taxon>
    </lineage>
</organism>
<keyword id="KW-1003">Cell membrane</keyword>
<keyword id="KW-0325">Glycoprotein</keyword>
<keyword id="KW-0472">Membrane</keyword>
<keyword id="KW-0812">Transmembrane</keyword>
<keyword id="KW-1133">Transmembrane helix</keyword>
<keyword id="KW-0813">Transport</keyword>
<dbReference type="EMBL" id="FN394492">
    <property type="protein sequence ID" value="CAY87358.1"/>
    <property type="molecule type" value="Genomic_DNA"/>
</dbReference>
<dbReference type="SMR" id="G0KYA8"/>
<dbReference type="GlyCosmos" id="G0KYA8">
    <property type="glycosylation" value="2 sites, No reported glycans"/>
</dbReference>
<dbReference type="GO" id="GO:0005886">
    <property type="term" value="C:plasma membrane"/>
    <property type="evidence" value="ECO:0007669"/>
    <property type="project" value="UniProtKB-SubCell"/>
</dbReference>
<dbReference type="GO" id="GO:0022857">
    <property type="term" value="F:transmembrane transporter activity"/>
    <property type="evidence" value="ECO:0007669"/>
    <property type="project" value="InterPro"/>
</dbReference>
<dbReference type="Gene3D" id="1.20.1250.20">
    <property type="entry name" value="MFS general substrate transporter like domains"/>
    <property type="match status" value="1"/>
</dbReference>
<dbReference type="InterPro" id="IPR010573">
    <property type="entry name" value="MFS_Str1/Tri12-like"/>
</dbReference>
<dbReference type="InterPro" id="IPR036259">
    <property type="entry name" value="MFS_trans_sf"/>
</dbReference>
<dbReference type="PANTHER" id="PTHR23501">
    <property type="entry name" value="MAJOR FACILITATOR SUPERFAMILY"/>
    <property type="match status" value="1"/>
</dbReference>
<dbReference type="PANTHER" id="PTHR23501:SF109">
    <property type="entry name" value="MAJOR FACILITATOR SUPERFAMILY (MFS) PROFILE DOMAIN-CONTAINING PROTEIN-RELATED"/>
    <property type="match status" value="1"/>
</dbReference>
<dbReference type="Pfam" id="PF06609">
    <property type="entry name" value="TRI12"/>
    <property type="match status" value="1"/>
</dbReference>
<dbReference type="SUPFAM" id="SSF103473">
    <property type="entry name" value="MFS general substrate transporter"/>
    <property type="match status" value="1"/>
</dbReference>